<sequence length="138" mass="15534">MRHGYRGRRFNRTTEHRKAMFANMSAALIKHEQIVTTLPKAKDLRPVIEKLISLGRTDSIHARRLAMAQIRDADMVKKLFSVLGPRYQSRPGGYCRIMKAGFRYGDNAPMAVIEFVDRDVDARGKDSGPTSVETAEAA</sequence>
<proteinExistence type="inferred from homology"/>
<keyword id="KW-0687">Ribonucleoprotein</keyword>
<keyword id="KW-0689">Ribosomal protein</keyword>
<organism>
    <name type="scientific">Methylorubrum extorquens (strain PA1)</name>
    <name type="common">Methylobacterium extorquens</name>
    <dbReference type="NCBI Taxonomy" id="419610"/>
    <lineage>
        <taxon>Bacteria</taxon>
        <taxon>Pseudomonadati</taxon>
        <taxon>Pseudomonadota</taxon>
        <taxon>Alphaproteobacteria</taxon>
        <taxon>Hyphomicrobiales</taxon>
        <taxon>Methylobacteriaceae</taxon>
        <taxon>Methylorubrum</taxon>
    </lineage>
</organism>
<accession>A9W4R4</accession>
<protein>
    <recommendedName>
        <fullName evidence="1">Large ribosomal subunit protein bL17</fullName>
    </recommendedName>
    <alternativeName>
        <fullName evidence="2">50S ribosomal protein L17</fullName>
    </alternativeName>
</protein>
<evidence type="ECO:0000255" key="1">
    <source>
        <dbReference type="HAMAP-Rule" id="MF_01368"/>
    </source>
</evidence>
<evidence type="ECO:0000305" key="2"/>
<comment type="subunit">
    <text evidence="1">Part of the 50S ribosomal subunit. Contacts protein L32.</text>
</comment>
<comment type="similarity">
    <text evidence="1">Belongs to the bacterial ribosomal protein bL17 family.</text>
</comment>
<reference key="1">
    <citation type="submission" date="2007-12" db="EMBL/GenBank/DDBJ databases">
        <title>Complete sequence of Methylobacterium extorquens PA1.</title>
        <authorList>
            <consortium name="US DOE Joint Genome Institute"/>
            <person name="Copeland A."/>
            <person name="Lucas S."/>
            <person name="Lapidus A."/>
            <person name="Barry K."/>
            <person name="Glavina del Rio T."/>
            <person name="Dalin E."/>
            <person name="Tice H."/>
            <person name="Pitluck S."/>
            <person name="Saunders E."/>
            <person name="Brettin T."/>
            <person name="Bruce D."/>
            <person name="Detter J.C."/>
            <person name="Han C."/>
            <person name="Schmutz J."/>
            <person name="Larimer F."/>
            <person name="Land M."/>
            <person name="Hauser L."/>
            <person name="Kyrpides N."/>
            <person name="Kim E."/>
            <person name="Marx C."/>
            <person name="Richardson P."/>
        </authorList>
    </citation>
    <scope>NUCLEOTIDE SEQUENCE [LARGE SCALE GENOMIC DNA]</scope>
    <source>
        <strain>PA1</strain>
    </source>
</reference>
<feature type="chain" id="PRO_1000144446" description="Large ribosomal subunit protein bL17">
    <location>
        <begin position="1"/>
        <end position="138"/>
    </location>
</feature>
<gene>
    <name evidence="1" type="primary">rplQ</name>
    <name type="ordered locus">Mext_2175</name>
</gene>
<dbReference type="EMBL" id="CP000908">
    <property type="protein sequence ID" value="ABY30570.1"/>
    <property type="molecule type" value="Genomic_DNA"/>
</dbReference>
<dbReference type="RefSeq" id="WP_003597112.1">
    <property type="nucleotide sequence ID" value="NC_010172.1"/>
</dbReference>
<dbReference type="SMR" id="A9W4R4"/>
<dbReference type="GeneID" id="72989863"/>
<dbReference type="KEGG" id="mex:Mext_2175"/>
<dbReference type="eggNOG" id="COG0203">
    <property type="taxonomic scope" value="Bacteria"/>
</dbReference>
<dbReference type="HOGENOM" id="CLU_074407_2_0_5"/>
<dbReference type="BioCyc" id="MEXT419610:MEXT_RS10980-MONOMER"/>
<dbReference type="GO" id="GO:0022625">
    <property type="term" value="C:cytosolic large ribosomal subunit"/>
    <property type="evidence" value="ECO:0007669"/>
    <property type="project" value="TreeGrafter"/>
</dbReference>
<dbReference type="GO" id="GO:0003735">
    <property type="term" value="F:structural constituent of ribosome"/>
    <property type="evidence" value="ECO:0007669"/>
    <property type="project" value="InterPro"/>
</dbReference>
<dbReference type="GO" id="GO:0006412">
    <property type="term" value="P:translation"/>
    <property type="evidence" value="ECO:0007669"/>
    <property type="project" value="UniProtKB-UniRule"/>
</dbReference>
<dbReference type="FunFam" id="3.90.1030.10:FF:000001">
    <property type="entry name" value="50S ribosomal protein L17"/>
    <property type="match status" value="1"/>
</dbReference>
<dbReference type="Gene3D" id="3.90.1030.10">
    <property type="entry name" value="Ribosomal protein L17"/>
    <property type="match status" value="1"/>
</dbReference>
<dbReference type="HAMAP" id="MF_01368">
    <property type="entry name" value="Ribosomal_bL17"/>
    <property type="match status" value="1"/>
</dbReference>
<dbReference type="InterPro" id="IPR000456">
    <property type="entry name" value="Ribosomal_bL17"/>
</dbReference>
<dbReference type="InterPro" id="IPR036373">
    <property type="entry name" value="Ribosomal_bL17_sf"/>
</dbReference>
<dbReference type="NCBIfam" id="TIGR00059">
    <property type="entry name" value="L17"/>
    <property type="match status" value="1"/>
</dbReference>
<dbReference type="PANTHER" id="PTHR14413:SF16">
    <property type="entry name" value="LARGE RIBOSOMAL SUBUNIT PROTEIN BL17M"/>
    <property type="match status" value="1"/>
</dbReference>
<dbReference type="PANTHER" id="PTHR14413">
    <property type="entry name" value="RIBOSOMAL PROTEIN L17"/>
    <property type="match status" value="1"/>
</dbReference>
<dbReference type="Pfam" id="PF01196">
    <property type="entry name" value="Ribosomal_L17"/>
    <property type="match status" value="1"/>
</dbReference>
<dbReference type="SUPFAM" id="SSF64263">
    <property type="entry name" value="Prokaryotic ribosomal protein L17"/>
    <property type="match status" value="1"/>
</dbReference>
<name>RL17_METEP</name>